<dbReference type="EMBL" id="CU928158">
    <property type="protein sequence ID" value="CAQ88012.1"/>
    <property type="molecule type" value="Genomic_DNA"/>
</dbReference>
<dbReference type="RefSeq" id="WP_000162574.1">
    <property type="nucleotide sequence ID" value="NC_011740.1"/>
</dbReference>
<dbReference type="SMR" id="B7LUV4"/>
<dbReference type="GeneID" id="93774470"/>
<dbReference type="KEGG" id="efe:EFER_0453"/>
<dbReference type="HOGENOM" id="CLU_108953_3_0_6"/>
<dbReference type="OrthoDB" id="9805462at2"/>
<dbReference type="Proteomes" id="UP000000745">
    <property type="component" value="Chromosome"/>
</dbReference>
<dbReference type="GO" id="GO:0005829">
    <property type="term" value="C:cytosol"/>
    <property type="evidence" value="ECO:0007669"/>
    <property type="project" value="TreeGrafter"/>
</dbReference>
<dbReference type="GO" id="GO:0003723">
    <property type="term" value="F:RNA binding"/>
    <property type="evidence" value="ECO:0007669"/>
    <property type="project" value="UniProtKB-UniRule"/>
</dbReference>
<dbReference type="GO" id="GO:0070929">
    <property type="term" value="P:trans-translation"/>
    <property type="evidence" value="ECO:0007669"/>
    <property type="project" value="UniProtKB-UniRule"/>
</dbReference>
<dbReference type="CDD" id="cd09294">
    <property type="entry name" value="SmpB"/>
    <property type="match status" value="1"/>
</dbReference>
<dbReference type="FunFam" id="2.40.280.10:FF:000001">
    <property type="entry name" value="SsrA-binding protein"/>
    <property type="match status" value="1"/>
</dbReference>
<dbReference type="Gene3D" id="2.40.280.10">
    <property type="match status" value="1"/>
</dbReference>
<dbReference type="HAMAP" id="MF_00023">
    <property type="entry name" value="SmpB"/>
    <property type="match status" value="1"/>
</dbReference>
<dbReference type="InterPro" id="IPR023620">
    <property type="entry name" value="SmpB"/>
</dbReference>
<dbReference type="InterPro" id="IPR000037">
    <property type="entry name" value="SsrA-bd_prot"/>
</dbReference>
<dbReference type="InterPro" id="IPR020081">
    <property type="entry name" value="SsrA-bd_prot_CS"/>
</dbReference>
<dbReference type="NCBIfam" id="NF003843">
    <property type="entry name" value="PRK05422.1"/>
    <property type="match status" value="1"/>
</dbReference>
<dbReference type="NCBIfam" id="TIGR00086">
    <property type="entry name" value="smpB"/>
    <property type="match status" value="1"/>
</dbReference>
<dbReference type="PANTHER" id="PTHR30308:SF2">
    <property type="entry name" value="SSRA-BINDING PROTEIN"/>
    <property type="match status" value="1"/>
</dbReference>
<dbReference type="PANTHER" id="PTHR30308">
    <property type="entry name" value="TMRNA-BINDING COMPONENT OF TRANS-TRANSLATION TAGGING COMPLEX"/>
    <property type="match status" value="1"/>
</dbReference>
<dbReference type="Pfam" id="PF01668">
    <property type="entry name" value="SmpB"/>
    <property type="match status" value="1"/>
</dbReference>
<dbReference type="SUPFAM" id="SSF74982">
    <property type="entry name" value="Small protein B (SmpB)"/>
    <property type="match status" value="1"/>
</dbReference>
<dbReference type="PROSITE" id="PS01317">
    <property type="entry name" value="SSRP"/>
    <property type="match status" value="1"/>
</dbReference>
<reference key="1">
    <citation type="journal article" date="2009" name="PLoS Genet.">
        <title>Organised genome dynamics in the Escherichia coli species results in highly diverse adaptive paths.</title>
        <authorList>
            <person name="Touchon M."/>
            <person name="Hoede C."/>
            <person name="Tenaillon O."/>
            <person name="Barbe V."/>
            <person name="Baeriswyl S."/>
            <person name="Bidet P."/>
            <person name="Bingen E."/>
            <person name="Bonacorsi S."/>
            <person name="Bouchier C."/>
            <person name="Bouvet O."/>
            <person name="Calteau A."/>
            <person name="Chiapello H."/>
            <person name="Clermont O."/>
            <person name="Cruveiller S."/>
            <person name="Danchin A."/>
            <person name="Diard M."/>
            <person name="Dossat C."/>
            <person name="Karoui M.E."/>
            <person name="Frapy E."/>
            <person name="Garry L."/>
            <person name="Ghigo J.M."/>
            <person name="Gilles A.M."/>
            <person name="Johnson J."/>
            <person name="Le Bouguenec C."/>
            <person name="Lescat M."/>
            <person name="Mangenot S."/>
            <person name="Martinez-Jehanne V."/>
            <person name="Matic I."/>
            <person name="Nassif X."/>
            <person name="Oztas S."/>
            <person name="Petit M.A."/>
            <person name="Pichon C."/>
            <person name="Rouy Z."/>
            <person name="Ruf C.S."/>
            <person name="Schneider D."/>
            <person name="Tourret J."/>
            <person name="Vacherie B."/>
            <person name="Vallenet D."/>
            <person name="Medigue C."/>
            <person name="Rocha E.P.C."/>
            <person name="Denamur E."/>
        </authorList>
    </citation>
    <scope>NUCLEOTIDE SEQUENCE [LARGE SCALE GENOMIC DNA]</scope>
    <source>
        <strain>ATCC 35469 / DSM 13698 / BCRC 15582 / CCUG 18766 / IAM 14443 / JCM 21226 / LMG 7866 / NBRC 102419 / NCTC 12128 / CDC 0568-73</strain>
    </source>
</reference>
<name>SSRP_ESCF3</name>
<evidence type="ECO:0000255" key="1">
    <source>
        <dbReference type="HAMAP-Rule" id="MF_00023"/>
    </source>
</evidence>
<comment type="function">
    <text evidence="1">Required for rescue of stalled ribosomes mediated by trans-translation. Binds to transfer-messenger RNA (tmRNA), required for stable association of tmRNA with ribosomes. tmRNA and SmpB together mimic tRNA shape, replacing the anticodon stem-loop with SmpB. tmRNA is encoded by the ssrA gene; the 2 termini fold to resemble tRNA(Ala) and it encodes a 'tag peptide', a short internal open reading frame. During trans-translation Ala-aminoacylated tmRNA acts like a tRNA, entering the A-site of stalled ribosomes, displacing the stalled mRNA. The ribosome then switches to translate the ORF on the tmRNA; the nascent peptide is terminated with the 'tag peptide' encoded by the tmRNA and targeted for degradation. The ribosome is freed to recommence translation, which seems to be the essential function of trans-translation.</text>
</comment>
<comment type="subcellular location">
    <subcellularLocation>
        <location evidence="1">Cytoplasm</location>
    </subcellularLocation>
    <text evidence="1">The tmRNA-SmpB complex associates with stalled 70S ribosomes.</text>
</comment>
<comment type="similarity">
    <text evidence="1">Belongs to the SmpB family.</text>
</comment>
<gene>
    <name evidence="1" type="primary">smpB</name>
    <name type="ordered locus">EFER_0453</name>
</gene>
<sequence length="160" mass="18269">MTKKKAHKPGSATIALNKRARHEYFIEEEFEAGLALQGWEVKSLRAGKANISDSYVLLRDGEAFLFGANITPMAVASTHVVCDPTRTRKLLLNQRELDSLYGRVNREGYTVVALSLYWKNAWCKVKIGVAKGKKQHDKRSDIKEREWQVDKARIMKNAHR</sequence>
<keyword id="KW-0963">Cytoplasm</keyword>
<keyword id="KW-0694">RNA-binding</keyword>
<protein>
    <recommendedName>
        <fullName evidence="1">SsrA-binding protein</fullName>
    </recommendedName>
    <alternativeName>
        <fullName evidence="1">Small protein B</fullName>
    </alternativeName>
</protein>
<accession>B7LUV4</accession>
<feature type="chain" id="PRO_1000116424" description="SsrA-binding protein">
    <location>
        <begin position="1"/>
        <end position="160"/>
    </location>
</feature>
<organism>
    <name type="scientific">Escherichia fergusonii (strain ATCC 35469 / DSM 13698 / CCUG 18766 / IAM 14443 / JCM 21226 / LMG 7866 / NBRC 102419 / NCTC 12128 / CDC 0568-73)</name>
    <dbReference type="NCBI Taxonomy" id="585054"/>
    <lineage>
        <taxon>Bacteria</taxon>
        <taxon>Pseudomonadati</taxon>
        <taxon>Pseudomonadota</taxon>
        <taxon>Gammaproteobacteria</taxon>
        <taxon>Enterobacterales</taxon>
        <taxon>Enterobacteriaceae</taxon>
        <taxon>Escherichia</taxon>
    </lineage>
</organism>
<proteinExistence type="inferred from homology"/>